<keyword id="KW-0147">Chitin-binding</keyword>
<keyword id="KW-0964">Secreted</keyword>
<keyword id="KW-0732">Signal</keyword>
<organism>
    <name type="scientific">Yersinia enterocolitica serotype O:8 / biotype 1B (strain NCTC 13174 / 8081)</name>
    <dbReference type="NCBI Taxonomy" id="393305"/>
    <lineage>
        <taxon>Bacteria</taxon>
        <taxon>Pseudomonadati</taxon>
        <taxon>Pseudomonadota</taxon>
        <taxon>Gammaproteobacteria</taxon>
        <taxon>Enterobacterales</taxon>
        <taxon>Yersiniaceae</taxon>
        <taxon>Yersinia</taxon>
    </lineage>
</organism>
<protein>
    <recommendedName>
        <fullName evidence="1">GlcNAc-binding protein A</fullName>
    </recommendedName>
</protein>
<sequence>MKLNKIMLAMVVMSISGTAMAHGYIENPPSRNFLCNAQGGSLNKDCGGVQYEPQSSGETADGFPQQGPVDGKLASGDNWVSVNLNQQTAERWTKVKMKAGPQEFKWKFTAAHPIADFKYYMTKQDWNPNQPLTRDSLDLTPFCVIPGGPASTTGSTTHTCNIPERTGYQVIYGAWDVSDTPGTFYNMIDAEFDGATGEVVVSEWTKSIGNIEPHDDLNAGDTVKLRMFDQQGERSDLVVEITIADAKEGKKNNWSHALASKLNNTHQDIRAGKKDSKGTVTATHGANAIFINANSNILRAEVQIEKSPAGEVSATDASFSANGMKKEYQMADGALAIHFDVKTMGSMDLEAKVFAADNSVKGYKDMTLEDASQHVSIAMTGLKAGKHTLVILGTDAQGKTQQQSIDFMVKGETVKPEVKPEVKPEVDGANKQCTAPAWSNKSSYQAKDTVTHNGRIYMSKWWADKASVPGDAAVTDTTGNGSGWGKVWEDKGAC</sequence>
<name>GBPA_YERE8</name>
<reference key="1">
    <citation type="journal article" date="2006" name="PLoS Genet.">
        <title>The complete genome sequence and comparative genome analysis of the high pathogenicity Yersinia enterocolitica strain 8081.</title>
        <authorList>
            <person name="Thomson N.R."/>
            <person name="Howard S."/>
            <person name="Wren B.W."/>
            <person name="Holden M.T.G."/>
            <person name="Crossman L."/>
            <person name="Challis G.L."/>
            <person name="Churcher C."/>
            <person name="Mungall K."/>
            <person name="Brooks K."/>
            <person name="Chillingworth T."/>
            <person name="Feltwell T."/>
            <person name="Abdellah Z."/>
            <person name="Hauser H."/>
            <person name="Jagels K."/>
            <person name="Maddison M."/>
            <person name="Moule S."/>
            <person name="Sanders M."/>
            <person name="Whitehead S."/>
            <person name="Quail M.A."/>
            <person name="Dougan G."/>
            <person name="Parkhill J."/>
            <person name="Prentice M.B."/>
        </authorList>
    </citation>
    <scope>NUCLEOTIDE SEQUENCE [LARGE SCALE GENOMIC DNA]</scope>
    <source>
        <strain>NCTC 13174 / 8081</strain>
    </source>
</reference>
<proteinExistence type="inferred from homology"/>
<gene>
    <name evidence="1" type="primary">gbpA</name>
    <name type="ordered locus">YE3576</name>
</gene>
<comment type="function">
    <text evidence="1">Probably interacts with GlcNAc residues. May promote attachment to both epithelial cell surfaces and chitin.</text>
</comment>
<comment type="subcellular location">
    <subcellularLocation>
        <location evidence="1">Secreted</location>
    </subcellularLocation>
</comment>
<comment type="similarity">
    <text evidence="1">Belongs to the GbpA family.</text>
</comment>
<feature type="signal peptide" evidence="1">
    <location>
        <begin position="1"/>
        <end position="21"/>
    </location>
</feature>
<feature type="chain" id="PRO_5000201303" description="GlcNAc-binding protein A">
    <location>
        <begin position="22"/>
        <end position="494"/>
    </location>
</feature>
<feature type="domain" description="Chitin-binding type-4" evidence="1">
    <location>
        <begin position="22"/>
        <end position="192"/>
    </location>
</feature>
<feature type="domain" description="Chitin-binding type-3" evidence="1">
    <location>
        <begin position="435"/>
        <end position="484"/>
    </location>
</feature>
<feature type="region of interest" description="Disordered" evidence="2">
    <location>
        <begin position="474"/>
        <end position="494"/>
    </location>
</feature>
<accession>A1JQE6</accession>
<dbReference type="EMBL" id="AM286415">
    <property type="protein sequence ID" value="CAL13602.1"/>
    <property type="molecule type" value="Genomic_DNA"/>
</dbReference>
<dbReference type="RefSeq" id="WP_005173861.1">
    <property type="nucleotide sequence ID" value="NC_008800.1"/>
</dbReference>
<dbReference type="RefSeq" id="YP_001007736.1">
    <property type="nucleotide sequence ID" value="NC_008800.1"/>
</dbReference>
<dbReference type="SMR" id="A1JQE6"/>
<dbReference type="CAZy" id="AA10">
    <property type="family name" value="Auxiliary Activities 10"/>
</dbReference>
<dbReference type="CAZy" id="CBM5">
    <property type="family name" value="Carbohydrate-Binding Module Family 5"/>
</dbReference>
<dbReference type="KEGG" id="yen:YE3576"/>
<dbReference type="PATRIC" id="fig|393305.7.peg.3799"/>
<dbReference type="eggNOG" id="COG3397">
    <property type="taxonomic scope" value="Bacteria"/>
</dbReference>
<dbReference type="HOGENOM" id="CLU_039396_2_0_6"/>
<dbReference type="OrthoDB" id="3675244at2"/>
<dbReference type="Proteomes" id="UP000000642">
    <property type="component" value="Chromosome"/>
</dbReference>
<dbReference type="GO" id="GO:0005576">
    <property type="term" value="C:extracellular region"/>
    <property type="evidence" value="ECO:0007669"/>
    <property type="project" value="UniProtKB-SubCell"/>
</dbReference>
<dbReference type="GO" id="GO:0030246">
    <property type="term" value="F:carbohydrate binding"/>
    <property type="evidence" value="ECO:0007669"/>
    <property type="project" value="InterPro"/>
</dbReference>
<dbReference type="GO" id="GO:0008061">
    <property type="term" value="F:chitin binding"/>
    <property type="evidence" value="ECO:0007669"/>
    <property type="project" value="UniProtKB-UniRule"/>
</dbReference>
<dbReference type="GO" id="GO:0004553">
    <property type="term" value="F:hydrolase activity, hydrolyzing O-glycosyl compounds"/>
    <property type="evidence" value="ECO:0007669"/>
    <property type="project" value="InterPro"/>
</dbReference>
<dbReference type="GO" id="GO:0005975">
    <property type="term" value="P:carbohydrate metabolic process"/>
    <property type="evidence" value="ECO:0007669"/>
    <property type="project" value="InterPro"/>
</dbReference>
<dbReference type="CDD" id="cd12215">
    <property type="entry name" value="ChiC_BD"/>
    <property type="match status" value="1"/>
</dbReference>
<dbReference type="CDD" id="cd21177">
    <property type="entry name" value="LPMO_AA10"/>
    <property type="match status" value="1"/>
</dbReference>
<dbReference type="Gene3D" id="2.60.40.2550">
    <property type="match status" value="1"/>
</dbReference>
<dbReference type="Gene3D" id="3.30.70.2150">
    <property type="match status" value="1"/>
</dbReference>
<dbReference type="Gene3D" id="2.10.10.20">
    <property type="entry name" value="Carbohydrate-binding module superfamily 5/12"/>
    <property type="match status" value="1"/>
</dbReference>
<dbReference type="Gene3D" id="2.70.50.50">
    <property type="entry name" value="chitin-binding protein cbp21"/>
    <property type="match status" value="1"/>
</dbReference>
<dbReference type="HAMAP" id="MF_01905">
    <property type="entry name" value="GbpA"/>
    <property type="match status" value="1"/>
</dbReference>
<dbReference type="InterPro" id="IPR036573">
    <property type="entry name" value="CBM_sf_5/12"/>
</dbReference>
<dbReference type="InterPro" id="IPR004302">
    <property type="entry name" value="Cellulose/chitin-bd_N"/>
</dbReference>
<dbReference type="InterPro" id="IPR041029">
    <property type="entry name" value="GbpA_2"/>
</dbReference>
<dbReference type="InterPro" id="IPR054063">
    <property type="entry name" value="GbpA_D3"/>
</dbReference>
<dbReference type="InterPro" id="IPR020879">
    <property type="entry name" value="GlcNAc-bd_A"/>
</dbReference>
<dbReference type="InterPro" id="IPR051024">
    <property type="entry name" value="GlcNAc_Chitin_IntDeg"/>
</dbReference>
<dbReference type="InterPro" id="IPR014756">
    <property type="entry name" value="Ig_E-set"/>
</dbReference>
<dbReference type="NCBIfam" id="NF009690">
    <property type="entry name" value="PRK13211.1"/>
    <property type="match status" value="1"/>
</dbReference>
<dbReference type="PANTHER" id="PTHR34823:SF1">
    <property type="entry name" value="CHITIN-BINDING TYPE-4 DOMAIN-CONTAINING PROTEIN"/>
    <property type="match status" value="1"/>
</dbReference>
<dbReference type="PANTHER" id="PTHR34823">
    <property type="entry name" value="GLCNAC-BINDING PROTEIN A"/>
    <property type="match status" value="1"/>
</dbReference>
<dbReference type="Pfam" id="PF18416">
    <property type="entry name" value="GbpA_2"/>
    <property type="match status" value="1"/>
</dbReference>
<dbReference type="Pfam" id="PF21868">
    <property type="entry name" value="GbpA_D3"/>
    <property type="match status" value="1"/>
</dbReference>
<dbReference type="Pfam" id="PF03067">
    <property type="entry name" value="LPMO_10"/>
    <property type="match status" value="1"/>
</dbReference>
<dbReference type="SUPFAM" id="SSF51055">
    <property type="entry name" value="Carbohydrate binding domain"/>
    <property type="match status" value="1"/>
</dbReference>
<dbReference type="SUPFAM" id="SSF81296">
    <property type="entry name" value="E set domains"/>
    <property type="match status" value="1"/>
</dbReference>
<evidence type="ECO:0000255" key="1">
    <source>
        <dbReference type="HAMAP-Rule" id="MF_01905"/>
    </source>
</evidence>
<evidence type="ECO:0000256" key="2">
    <source>
        <dbReference type="SAM" id="MobiDB-lite"/>
    </source>
</evidence>